<organism>
    <name type="scientific">Coturnix japonica</name>
    <name type="common">Japanese quail</name>
    <name type="synonym">Coturnix coturnix japonica</name>
    <dbReference type="NCBI Taxonomy" id="93934"/>
    <lineage>
        <taxon>Eukaryota</taxon>
        <taxon>Metazoa</taxon>
        <taxon>Chordata</taxon>
        <taxon>Craniata</taxon>
        <taxon>Vertebrata</taxon>
        <taxon>Euteleostomi</taxon>
        <taxon>Archelosauria</taxon>
        <taxon>Archosauria</taxon>
        <taxon>Dinosauria</taxon>
        <taxon>Saurischia</taxon>
        <taxon>Theropoda</taxon>
        <taxon>Coelurosauria</taxon>
        <taxon>Aves</taxon>
        <taxon>Neognathae</taxon>
        <taxon>Galloanserae</taxon>
        <taxon>Galliformes</taxon>
        <taxon>Phasianidae</taxon>
        <taxon>Perdicinae</taxon>
        <taxon>Coturnix</taxon>
    </lineage>
</organism>
<accession>P42662</accession>
<accession>Q587K6</accession>
<protein>
    <recommendedName>
        <fullName>Astacin-like metalloendopeptidase</fullName>
        <ecNumber>3.4.24.-</ecNumber>
    </recommendedName>
    <alternativeName>
        <fullName evidence="9">Chorioallantoic membrane-1</fullName>
        <shortName evidence="9">CAM-1</shortName>
    </alternativeName>
    <alternativeName>
        <fullName evidence="8">Quail hatching enzyme</fullName>
        <shortName evidence="8">QHE</shortName>
    </alternativeName>
</protein>
<proteinExistence type="evidence at protein level"/>
<dbReference type="EC" id="3.4.24.-"/>
<dbReference type="EMBL" id="U12642">
    <property type="protein sequence ID" value="AAA20842.1"/>
    <property type="molecule type" value="mRNA"/>
</dbReference>
<dbReference type="EMBL" id="AB210833">
    <property type="protein sequence ID" value="BAD95472.1"/>
    <property type="molecule type" value="mRNA"/>
</dbReference>
<dbReference type="PIR" id="S41055">
    <property type="entry name" value="S41055"/>
</dbReference>
<dbReference type="SMR" id="P42662"/>
<dbReference type="MEROPS" id="M12.324"/>
<dbReference type="BRENDA" id="3.4.24.21">
    <property type="organism ID" value="1673"/>
</dbReference>
<dbReference type="Proteomes" id="UP000694412">
    <property type="component" value="Unplaced"/>
</dbReference>
<dbReference type="GO" id="GO:0060473">
    <property type="term" value="C:cortical granule"/>
    <property type="evidence" value="ECO:0000250"/>
    <property type="project" value="UniProtKB"/>
</dbReference>
<dbReference type="GO" id="GO:0005737">
    <property type="term" value="C:cytoplasm"/>
    <property type="evidence" value="ECO:0000250"/>
    <property type="project" value="UniProtKB"/>
</dbReference>
<dbReference type="GO" id="GO:0005886">
    <property type="term" value="C:plasma membrane"/>
    <property type="evidence" value="ECO:0000250"/>
    <property type="project" value="UniProtKB"/>
</dbReference>
<dbReference type="GO" id="GO:0070001">
    <property type="term" value="F:aspartic-type peptidase activity"/>
    <property type="evidence" value="ECO:0000250"/>
    <property type="project" value="UniProtKB"/>
</dbReference>
<dbReference type="GO" id="GO:0070002">
    <property type="term" value="F:glutamic-type peptidase activity"/>
    <property type="evidence" value="ECO:0000250"/>
    <property type="project" value="UniProtKB"/>
</dbReference>
<dbReference type="GO" id="GO:0004222">
    <property type="term" value="F:metalloendopeptidase activity"/>
    <property type="evidence" value="ECO:0007669"/>
    <property type="project" value="InterPro"/>
</dbReference>
<dbReference type="GO" id="GO:0008233">
    <property type="term" value="F:peptidase activity"/>
    <property type="evidence" value="ECO:0000250"/>
    <property type="project" value="UniProtKB"/>
</dbReference>
<dbReference type="GO" id="GO:0008270">
    <property type="term" value="F:zinc ion binding"/>
    <property type="evidence" value="ECO:0007669"/>
    <property type="project" value="InterPro"/>
</dbReference>
<dbReference type="GO" id="GO:0007155">
    <property type="term" value="P:cell adhesion"/>
    <property type="evidence" value="ECO:0000250"/>
    <property type="project" value="UniProtKB"/>
</dbReference>
<dbReference type="GO" id="GO:0009566">
    <property type="term" value="P:fertilization"/>
    <property type="evidence" value="ECO:0000250"/>
    <property type="project" value="UniProtKB"/>
</dbReference>
<dbReference type="GO" id="GO:2000360">
    <property type="term" value="P:negative regulation of binding of sperm to zona pellucida"/>
    <property type="evidence" value="ECO:0000250"/>
    <property type="project" value="UniProtKB"/>
</dbReference>
<dbReference type="GO" id="GO:0010954">
    <property type="term" value="P:positive regulation of protein processing"/>
    <property type="evidence" value="ECO:0000250"/>
    <property type="project" value="UniProtKB"/>
</dbReference>
<dbReference type="GO" id="GO:0060468">
    <property type="term" value="P:prevention of polyspermy"/>
    <property type="evidence" value="ECO:0000250"/>
    <property type="project" value="UniProtKB"/>
</dbReference>
<dbReference type="GO" id="GO:0006508">
    <property type="term" value="P:proteolysis"/>
    <property type="evidence" value="ECO:0007669"/>
    <property type="project" value="UniProtKB-KW"/>
</dbReference>
<dbReference type="CDD" id="cd00041">
    <property type="entry name" value="CUB"/>
    <property type="match status" value="1"/>
</dbReference>
<dbReference type="CDD" id="cd04283">
    <property type="entry name" value="ZnMc_hatching_enzyme"/>
    <property type="match status" value="1"/>
</dbReference>
<dbReference type="FunFam" id="3.40.390.10:FF:000040">
    <property type="entry name" value="Metalloendopeptidase"/>
    <property type="match status" value="1"/>
</dbReference>
<dbReference type="FunFam" id="2.60.120.290:FF:000005">
    <property type="entry name" value="Procollagen C-endopeptidase enhancer 1"/>
    <property type="match status" value="1"/>
</dbReference>
<dbReference type="Gene3D" id="3.40.390.10">
    <property type="entry name" value="Collagenase (Catalytic Domain)"/>
    <property type="match status" value="1"/>
</dbReference>
<dbReference type="Gene3D" id="2.60.120.290">
    <property type="entry name" value="Spermadhesin, CUB domain"/>
    <property type="match status" value="1"/>
</dbReference>
<dbReference type="InterPro" id="IPR000859">
    <property type="entry name" value="CUB_dom"/>
</dbReference>
<dbReference type="InterPro" id="IPR017370">
    <property type="entry name" value="Hatching_enzyme_Uvs2-like"/>
</dbReference>
<dbReference type="InterPro" id="IPR024079">
    <property type="entry name" value="MetalloPept_cat_dom_sf"/>
</dbReference>
<dbReference type="InterPro" id="IPR001506">
    <property type="entry name" value="Peptidase_M12A"/>
</dbReference>
<dbReference type="InterPro" id="IPR006026">
    <property type="entry name" value="Peptidase_Metallo"/>
</dbReference>
<dbReference type="InterPro" id="IPR035914">
    <property type="entry name" value="Sperma_CUB_dom_sf"/>
</dbReference>
<dbReference type="InterPro" id="IPR034039">
    <property type="entry name" value="ZnMP_hatching_enz"/>
</dbReference>
<dbReference type="PANTHER" id="PTHR10127:SF899">
    <property type="entry name" value="ASTACIN-LIKE METALLOENDOPEPTIDASE-RELATED"/>
    <property type="match status" value="1"/>
</dbReference>
<dbReference type="PANTHER" id="PTHR10127">
    <property type="entry name" value="DISCOIDIN, CUB, EGF, LAMININ , AND ZINC METALLOPROTEASE DOMAIN CONTAINING"/>
    <property type="match status" value="1"/>
</dbReference>
<dbReference type="Pfam" id="PF01400">
    <property type="entry name" value="Astacin"/>
    <property type="match status" value="1"/>
</dbReference>
<dbReference type="Pfam" id="PF00431">
    <property type="entry name" value="CUB"/>
    <property type="match status" value="1"/>
</dbReference>
<dbReference type="PIRSF" id="PIRSF038057">
    <property type="entry name" value="Hatching_enzyme_Uvs2"/>
    <property type="match status" value="1"/>
</dbReference>
<dbReference type="PRINTS" id="PR00480">
    <property type="entry name" value="ASTACIN"/>
</dbReference>
<dbReference type="SMART" id="SM00042">
    <property type="entry name" value="CUB"/>
    <property type="match status" value="1"/>
</dbReference>
<dbReference type="SMART" id="SM00235">
    <property type="entry name" value="ZnMc"/>
    <property type="match status" value="1"/>
</dbReference>
<dbReference type="SUPFAM" id="SSF55486">
    <property type="entry name" value="Metalloproteases ('zincins'), catalytic domain"/>
    <property type="match status" value="1"/>
</dbReference>
<dbReference type="SUPFAM" id="SSF49854">
    <property type="entry name" value="Spermadhesin, CUB domain"/>
    <property type="match status" value="1"/>
</dbReference>
<dbReference type="PROSITE" id="PS51864">
    <property type="entry name" value="ASTACIN"/>
    <property type="match status" value="1"/>
</dbReference>
<dbReference type="PROSITE" id="PS01180">
    <property type="entry name" value="CUB"/>
    <property type="match status" value="1"/>
</dbReference>
<evidence type="ECO:0000250" key="1">
    <source>
        <dbReference type="UniProtKB" id="Q6HA09"/>
    </source>
</evidence>
<evidence type="ECO:0000255" key="2"/>
<evidence type="ECO:0000255" key="3">
    <source>
        <dbReference type="PROSITE-ProRule" id="PRU00059"/>
    </source>
</evidence>
<evidence type="ECO:0000255" key="4">
    <source>
        <dbReference type="PROSITE-ProRule" id="PRU01211"/>
    </source>
</evidence>
<evidence type="ECO:0000256" key="5">
    <source>
        <dbReference type="SAM" id="MobiDB-lite"/>
    </source>
</evidence>
<evidence type="ECO:0000269" key="6">
    <source>
    </source>
</evidence>
<evidence type="ECO:0000269" key="7">
    <source>
    </source>
</evidence>
<evidence type="ECO:0000303" key="8">
    <source>
    </source>
</evidence>
<evidence type="ECO:0000303" key="9">
    <source>
    </source>
</evidence>
<evidence type="ECO:0000305" key="10"/>
<evidence type="ECO:0000305" key="11">
    <source>
    </source>
</evidence>
<keyword id="KW-0025">Alternative splicing</keyword>
<keyword id="KW-1003">Cell membrane</keyword>
<keyword id="KW-0963">Cytoplasm</keyword>
<keyword id="KW-0968">Cytoplasmic vesicle</keyword>
<keyword id="KW-1015">Disulfide bond</keyword>
<keyword id="KW-0278">Fertilization</keyword>
<keyword id="KW-0378">Hydrolase</keyword>
<keyword id="KW-0472">Membrane</keyword>
<keyword id="KW-0479">Metal-binding</keyword>
<keyword id="KW-0482">Metalloprotease</keyword>
<keyword id="KW-0645">Protease</keyword>
<keyword id="KW-1185">Reference proteome</keyword>
<keyword id="KW-0732">Signal</keyword>
<keyword id="KW-0862">Zinc</keyword>
<keyword id="KW-0865">Zymogen</keyword>
<comment type="function">
    <text evidence="1 6">Probable oocyte-specific oolemmal receptor involved in sperm and egg adhesion and fertilization (By similarity). Protease which may play a role in the breaking down of the vitelline membrane (days 0-5) and possibly, in the digestion of the egg white (days 9-12) (PubMed:16003522).</text>
</comment>
<comment type="cofactor">
    <cofactor evidence="4">
        <name>Zn(2+)</name>
        <dbReference type="ChEBI" id="CHEBI:29105"/>
    </cofactor>
    <text evidence="4">Binds 1 zinc ion per subunit.</text>
</comment>
<comment type="subcellular location">
    <subcellularLocation>
        <location evidence="1">Cytoplasm</location>
    </subcellularLocation>
    <subcellularLocation>
        <location evidence="1">Cell membrane</location>
    </subcellularLocation>
    <subcellularLocation>
        <location evidence="1">Cytoplasmic vesicle</location>
        <location evidence="1">Secretory vesicle</location>
        <location evidence="1">Cortical granule</location>
    </subcellularLocation>
</comment>
<comment type="alternative products">
    <event type="alternative splicing"/>
    <isoform>
        <id>P42662-1</id>
        <name>1</name>
        <sequence type="displayed"/>
    </isoform>
    <isoform>
        <id>P42662-2</id>
        <name>2</name>
        <name>CAM-1</name>
        <sequence type="described" ref="VSP_059666"/>
    </isoform>
</comment>
<comment type="developmental stage">
    <text evidence="6">Expressed in ectodermal cells of the yolk sac during epiboly on days 0 - 5 (PubMed:16003522). Expressed in ectodermal cells of the albumen sac on days 8 - 13 (PubMed:16003522).</text>
</comment>
<comment type="induction">
    <text evidence="7">By 1,25-dihydroxyvitamin D-3.</text>
</comment>
<comment type="miscellaneous">
    <molecule>Isoform 2</molecule>
    <text evidence="6">Minor transcript.</text>
</comment>
<name>ASTL_COTJA</name>
<reference key="1">
    <citation type="journal article" date="1994" name="Biochim. Biophys. Acta">
        <title>A new member to the astacin family of metalloendopeptidases: a novel 1,25-dihydroxyvitamin D-3-stimulated mRNA from chorioallantoic membrane of quail.</title>
        <authorList>
            <person name="Elaroussi M.A."/>
            <person name="Deluca H.F."/>
        </authorList>
    </citation>
    <scope>NUCLEOTIDE SEQUENCE [MRNA] (ISOFORM 2)</scope>
    <scope>INDUCTION BY 1,25-DIHYDROXYVITAMIN D-3</scope>
    <source>
        <tissue>Chorioallantoic membrane</tissue>
    </source>
</reference>
<reference key="2">
    <citation type="journal article" date="2005" name="Dev. Genes Evol.">
        <title>Cloning of a quail homologue of hatching enzyme: its conserved function and additional function in egg envelope digestion.</title>
        <authorList>
            <person name="Yasumasu S."/>
            <person name="Mao K.M."/>
            <person name="Sultana F."/>
            <person name="Sakaguchi H."/>
            <person name="Yoshizaki N."/>
        </authorList>
    </citation>
    <scope>NUCLEOTIDE SEQUENCE [MRNA] (ISOFORM 1)</scope>
    <scope>DEVELOPMENTAL STAGE</scope>
    <scope>FUNCTION</scope>
    <scope>PROTEOLYTIC CLEAVAGE</scope>
    <scope>ALTERNATIVE SPLICING</scope>
    <source>
        <tissue>Embryo</tissue>
    </source>
</reference>
<sequence>MDLKMLLIFTAFLLPAVLGFPIQDNYENSTATSESTQVTTEESIYDSPSPTETDSEDDVIFNRILEVNKDSSRYLQEGDIVPRRSRSAFNCRNCYWPQSMDGIVRIPYVLDPTYEENHVRGILEAMAEFETLTCINFVKRKTERDYLIIRSADGCWSNYGKVGGGQTVSVMKGGCMWKGIIQHELDHALGFLHEHSRSDRDKYVKIMWEYISPACRPDFRKFENSNNLGLPYDYSSVMHYGPHTFTNTTGKATIVPVPDGSVHIGQRLGLSNLDVAKINKLYNCSRCSTIIDAAFGSLKSANYPRNYSDNTNCVWLIRTRSRKISLHFRDFDLRRTRGCQGDYVKVYDGSSKYSPVLMNKTCGSQIPTDVVSSSSLMLIEFVTDGRDTASGFQATFTSARMQRRFNTRN</sequence>
<feature type="signal peptide" evidence="2">
    <location>
        <begin position="1"/>
        <end position="19"/>
    </location>
</feature>
<feature type="propeptide" id="PRO_0000444990" evidence="11">
    <location>
        <begin position="20"/>
        <end position="86"/>
    </location>
</feature>
<feature type="chain" id="PRO_0000078183" description="Astacin-like metalloendopeptidase">
    <location>
        <begin position="87"/>
        <end position="409"/>
    </location>
</feature>
<feature type="domain" description="Peptidase M12A" evidence="4">
    <location>
        <begin position="87"/>
        <end position="285"/>
    </location>
</feature>
<feature type="domain" description="CUB" evidence="3">
    <location>
        <begin position="287"/>
        <end position="399"/>
    </location>
</feature>
<feature type="region of interest" description="Disordered" evidence="5">
    <location>
        <begin position="30"/>
        <end position="55"/>
    </location>
</feature>
<feature type="compositionally biased region" description="Low complexity" evidence="5">
    <location>
        <begin position="30"/>
        <end position="42"/>
    </location>
</feature>
<feature type="active site" evidence="4">
    <location>
        <position position="184"/>
    </location>
</feature>
<feature type="binding site" evidence="4">
    <location>
        <position position="183"/>
    </location>
    <ligand>
        <name>Zn(2+)</name>
        <dbReference type="ChEBI" id="CHEBI:29105"/>
        <note>catalytic</note>
    </ligand>
</feature>
<feature type="binding site" evidence="4">
    <location>
        <position position="187"/>
    </location>
    <ligand>
        <name>Zn(2+)</name>
        <dbReference type="ChEBI" id="CHEBI:29105"/>
        <note>catalytic</note>
    </ligand>
</feature>
<feature type="binding site" evidence="4">
    <location>
        <position position="193"/>
    </location>
    <ligand>
        <name>Zn(2+)</name>
        <dbReference type="ChEBI" id="CHEBI:29105"/>
        <note>catalytic</note>
    </ligand>
</feature>
<feature type="disulfide bond" evidence="4">
    <location>
        <begin position="91"/>
        <end position="94"/>
    </location>
</feature>
<feature type="disulfide bond" evidence="4">
    <location>
        <begin position="134"/>
        <end position="284"/>
    </location>
</feature>
<feature type="disulfide bond" evidence="4">
    <location>
        <begin position="155"/>
        <end position="175"/>
    </location>
</feature>
<feature type="disulfide bond" evidence="3">
    <location>
        <begin position="287"/>
        <end position="313"/>
    </location>
</feature>
<feature type="disulfide bond" evidence="3">
    <location>
        <begin position="339"/>
        <end position="362"/>
    </location>
</feature>
<feature type="splice variant" id="VSP_059666" description="In isoform 2." evidence="10">
    <location>
        <begin position="1"/>
        <end position="99"/>
    </location>
</feature>
<feature type="sequence conflict" description="In Ref. 1; AAA20842." evidence="10" ref="1">
    <location>
        <begin position="101"/>
        <end position="199"/>
    </location>
</feature>
<feature type="sequence conflict" description="In Ref. 2; BAD95472." evidence="10" ref="2">
    <original>C</original>
    <variation>D</variation>
    <location>
        <position position="215"/>
    </location>
</feature>
<feature type="sequence conflict" description="In Ref. 2; BAD95472." evidence="10" ref="2">
    <original>R</original>
    <variation>A</variation>
    <location>
        <position position="386"/>
    </location>
</feature>